<dbReference type="EMBL" id="AK010480">
    <property type="protein sequence ID" value="BAB26972.1"/>
    <property type="molecule type" value="mRNA"/>
</dbReference>
<dbReference type="EMBL" id="AK031405">
    <property type="protein sequence ID" value="BAC27389.1"/>
    <property type="molecule type" value="mRNA"/>
</dbReference>
<dbReference type="EMBL" id="AK035985">
    <property type="protein sequence ID" value="BAC29267.1"/>
    <property type="status" value="ALT_FRAME"/>
    <property type="molecule type" value="mRNA"/>
</dbReference>
<dbReference type="EMBL" id="AK039893">
    <property type="protein sequence ID" value="BAC30475.1"/>
    <property type="molecule type" value="mRNA"/>
</dbReference>
<dbReference type="EMBL" id="BC026425">
    <property type="protein sequence ID" value="AAH26425.1"/>
    <property type="molecule type" value="mRNA"/>
</dbReference>
<dbReference type="CCDS" id="CCDS53241.1">
    <molecule id="Q9CWP6-1"/>
</dbReference>
<dbReference type="CCDS" id="CCDS72467.1">
    <molecule id="Q9CWP6-3"/>
</dbReference>
<dbReference type="CCDS" id="CCDS72468.1">
    <molecule id="Q9CWP6-2"/>
</dbReference>
<dbReference type="RefSeq" id="NP_001277452.1">
    <molecule id="Q9CWP6-3"/>
    <property type="nucleotide sequence ID" value="NM_001290523.1"/>
</dbReference>
<dbReference type="RefSeq" id="NP_001277453.1">
    <molecule id="Q9CWP6-2"/>
    <property type="nucleotide sequence ID" value="NM_001290524.1"/>
</dbReference>
<dbReference type="RefSeq" id="NP_084006.2">
    <property type="nucleotide sequence ID" value="NM_029730.4"/>
</dbReference>
<dbReference type="PDB" id="1WIC">
    <property type="method" value="NMR"/>
    <property type="chains" value="A=317-455"/>
</dbReference>
<dbReference type="PDBsum" id="1WIC"/>
<dbReference type="SMR" id="Q9CWP6"/>
<dbReference type="FunCoup" id="Q9CWP6">
    <property type="interactions" value="2083"/>
</dbReference>
<dbReference type="IntAct" id="Q9CWP6">
    <property type="interactions" value="1"/>
</dbReference>
<dbReference type="STRING" id="10090.ENSMUSP00000004715"/>
<dbReference type="iPTMnet" id="Q9CWP6"/>
<dbReference type="PhosphoSitePlus" id="Q9CWP6"/>
<dbReference type="SwissPalm" id="Q9CWP6"/>
<dbReference type="jPOST" id="Q9CWP6"/>
<dbReference type="PaxDb" id="10090-ENSMUSP00000004715"/>
<dbReference type="PeptideAtlas" id="Q9CWP6"/>
<dbReference type="ProteomicsDB" id="291423">
    <molecule id="Q9CWP6-1"/>
</dbReference>
<dbReference type="ProteomicsDB" id="291424">
    <molecule id="Q9CWP6-2"/>
</dbReference>
<dbReference type="ProteomicsDB" id="291425">
    <molecule id="Q9CWP6-3"/>
</dbReference>
<dbReference type="ProteomicsDB" id="291426">
    <molecule id="Q9CWP6-4"/>
</dbReference>
<dbReference type="Pumba" id="Q9CWP6"/>
<dbReference type="Antibodypedia" id="516">
    <property type="antibodies" value="74 antibodies from 16 providers"/>
</dbReference>
<dbReference type="Ensembl" id="ENSMUST00000112247.9">
    <molecule id="Q9CWP6-2"/>
    <property type="protein sequence ID" value="ENSMUSP00000107866.3"/>
    <property type="gene ID" value="ENSMUSG00000061778.11"/>
</dbReference>
<dbReference type="Ensembl" id="ENSMUST00000112248.9">
    <molecule id="Q9CWP6-3"/>
    <property type="protein sequence ID" value="ENSMUSP00000107867.3"/>
    <property type="gene ID" value="ENSMUSG00000061778.11"/>
</dbReference>
<dbReference type="GeneID" id="76763"/>
<dbReference type="KEGG" id="mmu:76763"/>
<dbReference type="UCSC" id="uc009uvt.3">
    <molecule id="Q9CWP6-3"/>
    <property type="organism name" value="mouse"/>
</dbReference>
<dbReference type="UCSC" id="uc009uvu.3">
    <molecule id="Q9CWP6-2"/>
    <property type="organism name" value="mouse"/>
</dbReference>
<dbReference type="UCSC" id="uc009uvx.3">
    <molecule id="Q9CWP6-4"/>
    <property type="organism name" value="mouse"/>
</dbReference>
<dbReference type="AGR" id="MGI:1924013"/>
<dbReference type="CTD" id="158747"/>
<dbReference type="MGI" id="MGI:1924013">
    <property type="gene designation" value="Mospd2"/>
</dbReference>
<dbReference type="VEuPathDB" id="HostDB:ENSMUSG00000061778"/>
<dbReference type="eggNOG" id="KOG0439">
    <property type="taxonomic scope" value="Eukaryota"/>
</dbReference>
<dbReference type="eggNOG" id="KOG1470">
    <property type="taxonomic scope" value="Eukaryota"/>
</dbReference>
<dbReference type="GeneTree" id="ENSGT00390000016713"/>
<dbReference type="HOGENOM" id="CLU_028924_1_0_1"/>
<dbReference type="InParanoid" id="Q9CWP6"/>
<dbReference type="OrthoDB" id="75724at2759"/>
<dbReference type="PhylomeDB" id="Q9CWP6"/>
<dbReference type="Reactome" id="R-MMU-6798695">
    <property type="pathway name" value="Neutrophil degranulation"/>
</dbReference>
<dbReference type="Reactome" id="R-MMU-9013405">
    <property type="pathway name" value="RHOD GTPase cycle"/>
</dbReference>
<dbReference type="BioGRID-ORCS" id="76763">
    <property type="hits" value="0 hits in 77 CRISPR screens"/>
</dbReference>
<dbReference type="EvolutionaryTrace" id="Q9CWP6"/>
<dbReference type="PRO" id="PR:Q9CWP6"/>
<dbReference type="Proteomes" id="UP000000589">
    <property type="component" value="Chromosome X"/>
</dbReference>
<dbReference type="RNAct" id="Q9CWP6">
    <property type="molecule type" value="protein"/>
</dbReference>
<dbReference type="Bgee" id="ENSMUSG00000061778">
    <property type="expression patterns" value="Expressed in parotid gland and 266 other cell types or tissues"/>
</dbReference>
<dbReference type="ExpressionAtlas" id="Q9CWP6">
    <property type="expression patterns" value="baseline and differential"/>
</dbReference>
<dbReference type="GO" id="GO:0005789">
    <property type="term" value="C:endoplasmic reticulum membrane"/>
    <property type="evidence" value="ECO:0000250"/>
    <property type="project" value="UniProtKB"/>
</dbReference>
<dbReference type="GO" id="GO:0044232">
    <property type="term" value="C:organelle membrane contact site"/>
    <property type="evidence" value="ECO:0000250"/>
    <property type="project" value="UniProtKB"/>
</dbReference>
<dbReference type="GO" id="GO:0006935">
    <property type="term" value="P:chemotaxis"/>
    <property type="evidence" value="ECO:0007669"/>
    <property type="project" value="UniProtKB-KW"/>
</dbReference>
<dbReference type="GO" id="GO:0140042">
    <property type="term" value="P:lipid droplet formation"/>
    <property type="evidence" value="ECO:0000250"/>
    <property type="project" value="UniProtKB"/>
</dbReference>
<dbReference type="CDD" id="cd00170">
    <property type="entry name" value="SEC14"/>
    <property type="match status" value="1"/>
</dbReference>
<dbReference type="FunFam" id="3.40.525.10:FF:000010">
    <property type="entry name" value="motile sperm domain-containing protein 2 isoform X1"/>
    <property type="match status" value="1"/>
</dbReference>
<dbReference type="FunFam" id="2.60.40.10:FF:000586">
    <property type="entry name" value="motile sperm domain-containing protein 2 isoform X2"/>
    <property type="match status" value="1"/>
</dbReference>
<dbReference type="Gene3D" id="3.40.525.10">
    <property type="entry name" value="CRAL-TRIO lipid binding domain"/>
    <property type="match status" value="1"/>
</dbReference>
<dbReference type="Gene3D" id="2.60.40.10">
    <property type="entry name" value="Immunoglobulins"/>
    <property type="match status" value="1"/>
</dbReference>
<dbReference type="InterPro" id="IPR001251">
    <property type="entry name" value="CRAL-TRIO_dom"/>
</dbReference>
<dbReference type="InterPro" id="IPR036865">
    <property type="entry name" value="CRAL-TRIO_dom_sf"/>
</dbReference>
<dbReference type="InterPro" id="IPR036273">
    <property type="entry name" value="CRAL/TRIO_N_dom_sf"/>
</dbReference>
<dbReference type="InterPro" id="IPR053012">
    <property type="entry name" value="ER-organelle_contact"/>
</dbReference>
<dbReference type="InterPro" id="IPR013783">
    <property type="entry name" value="Ig-like_fold"/>
</dbReference>
<dbReference type="InterPro" id="IPR000535">
    <property type="entry name" value="MSP_dom"/>
</dbReference>
<dbReference type="InterPro" id="IPR008962">
    <property type="entry name" value="PapD-like_sf"/>
</dbReference>
<dbReference type="PANTHER" id="PTHR46384">
    <property type="entry name" value="MOTILE SPERM DOMAIN-CONTAINING PROTEIN 2"/>
    <property type="match status" value="1"/>
</dbReference>
<dbReference type="PANTHER" id="PTHR46384:SF1">
    <property type="entry name" value="MOTILE SPERM DOMAIN-CONTAINING PROTEIN 2"/>
    <property type="match status" value="1"/>
</dbReference>
<dbReference type="Pfam" id="PF00650">
    <property type="entry name" value="CRAL_TRIO"/>
    <property type="match status" value="1"/>
</dbReference>
<dbReference type="Pfam" id="PF00635">
    <property type="entry name" value="Motile_Sperm"/>
    <property type="match status" value="1"/>
</dbReference>
<dbReference type="SMART" id="SM00516">
    <property type="entry name" value="SEC14"/>
    <property type="match status" value="1"/>
</dbReference>
<dbReference type="SUPFAM" id="SSF52087">
    <property type="entry name" value="CRAL/TRIO domain"/>
    <property type="match status" value="1"/>
</dbReference>
<dbReference type="SUPFAM" id="SSF46938">
    <property type="entry name" value="CRAL/TRIO N-terminal domain"/>
    <property type="match status" value="1"/>
</dbReference>
<dbReference type="SUPFAM" id="SSF49354">
    <property type="entry name" value="PapD-like"/>
    <property type="match status" value="1"/>
</dbReference>
<dbReference type="PROSITE" id="PS50191">
    <property type="entry name" value="CRAL_TRIO"/>
    <property type="match status" value="1"/>
</dbReference>
<dbReference type="PROSITE" id="PS50202">
    <property type="entry name" value="MSP"/>
    <property type="match status" value="1"/>
</dbReference>
<comment type="function">
    <text evidence="1">Endoplasmic reticulum-anchored protein that mediates the formation of contact sites between the endoplasmic (ER) and endosomes, mitochondria or Golgi through interaction with conventional- and phosphorylated-FFAT-containing organelle-bound proteins. In addition, forms endoplasmic reticulum (ER)-lipid droplets (LDs) contacts through a direct protein-membrane interaction and participates in LDs homeostasis. The attachment mechanism involves an amphipathic helix that has an affinity for lipid packing defects present at the surface of LDs. Promotes migration of primary monocytes and neutrophils, in response to various chemokines.</text>
</comment>
<comment type="subunit">
    <text evidence="1">Homooligomer. Interacts (via MSP domain) with STARD3NL (via FFAT motif), RMDN3 (via FFAT motif), OSBPL1A (via FFAT motif) and CERT1 (via FFAT motif). Interacts (via MSP domain) with STARD3 (via phosphorylated FFAT motif); this interaction depends on the critical phosphorylation of STARD3 on 'Ser-209'. Interacts with RB1CC1 (via phosphorylated FFAT motif), MIGA2 (via phosphorylated FFAT motif) and OSBPL1A (via FFAT motif).</text>
</comment>
<comment type="subcellular location">
    <subcellularLocation>
        <location evidence="1">Endoplasmic reticulum membrane</location>
        <topology evidence="1">Single-pass type IV membrane protein</topology>
    </subcellularLocation>
    <text evidence="1">Localization to contact sites involving the endoplasmic reticulum and several organelles is regulated by interaction with proteins containing FFAT motif. Dynamically distributes between specific subdomains of the endoplasmic reticulum (ER): ER membranes in contact with lipid droplets (LDs) and the remainder of the ER.</text>
</comment>
<comment type="alternative products">
    <event type="alternative splicing"/>
    <isoform>
        <id>Q9CWP6-1</id>
        <name>1</name>
        <sequence type="displayed"/>
    </isoform>
    <isoform>
        <id>Q9CWP6-2</id>
        <name>2</name>
        <sequence type="described" ref="VSP_014050 VSP_014051"/>
    </isoform>
    <isoform>
        <id>Q9CWP6-3</id>
        <name>3</name>
        <sequence type="described" ref="VSP_014049 VSP_014052"/>
    </isoform>
    <isoform>
        <id>Q9CWP6-4</id>
        <name>4</name>
        <sequence type="described" ref="VSP_014047 VSP_014048"/>
    </isoform>
</comment>
<comment type="domain">
    <text evidence="1">The MSP domain is required for binding to the FFAT motif of target proteins.</text>
</comment>
<comment type="domain">
    <text evidence="1">The CRAL-TRIO domain is necessary for the recruitment to lipid droplets (LDs) and mediates the formation of ER-LDs contacts through an amphipathic helix.</text>
</comment>
<comment type="domain">
    <text evidence="1">The transmembrane domain is necessary for binding to LDs.</text>
</comment>
<comment type="sequence caution" evidence="8">
    <conflict type="frameshift">
        <sequence resource="EMBL-CDS" id="BAC29267"/>
    </conflict>
</comment>
<accession>Q9CWP6</accession>
<accession>Q8BYF8</accession>
<accession>Q8BZB6</accession>
<accession>Q8C0G1</accession>
<accession>Q8R0T7</accession>
<sequence>MAENNAQNKAKLISETRRRFEAEYVTEKSEKYDSRDVERLQQDDNWVESYLYWRHNVVDETLKMLDESFQWRKEFSVNDLSESSIPRWLLELGGIYLHGYDKEGNKLFWIRVKYHIKDQKTIMDKKKLIAFWLERYAKRENGKPITVMFDMSETGLNSIDMDFVRFIINCFKVYYPKYLSKIVIFDMPWIMNAAFKIVKSWLGPEAVSLLKFTSKNEIQEYVSVEYLPPHMGGTDPFKYSYPPLVDDDFQTPLCENGPIASEDETSSKEDIEGDGKETLETISNEEPPALSEKSNPTESVSKKDENEKVDSKTKTFKKPLSVFKGPLLHISPAEELYFGSIESGEKKTLIVLTNVTKNIVAFKVRTTAPEKYRVKPSNSSCDPGASIDIIVSPHGGLTVSAQDRFLIMAAEMEQSSGTGPAELSQFWKEVPRNKVMEHRLRCHTVESSKPNSLMLKDSISTMSDKTSEDLYLQLNRLLESNRKLEDQLQRSIWFQQLLLALTMVLLDFVVSFFYSLYN</sequence>
<organism>
    <name type="scientific">Mus musculus</name>
    <name type="common">Mouse</name>
    <dbReference type="NCBI Taxonomy" id="10090"/>
    <lineage>
        <taxon>Eukaryota</taxon>
        <taxon>Metazoa</taxon>
        <taxon>Chordata</taxon>
        <taxon>Craniata</taxon>
        <taxon>Vertebrata</taxon>
        <taxon>Euteleostomi</taxon>
        <taxon>Mammalia</taxon>
        <taxon>Eutheria</taxon>
        <taxon>Euarchontoglires</taxon>
        <taxon>Glires</taxon>
        <taxon>Rodentia</taxon>
        <taxon>Myomorpha</taxon>
        <taxon>Muroidea</taxon>
        <taxon>Muridae</taxon>
        <taxon>Murinae</taxon>
        <taxon>Mus</taxon>
        <taxon>Mus</taxon>
    </lineage>
</organism>
<name>MSPD2_MOUSE</name>
<feature type="chain" id="PRO_0000213464" description="Motile sperm domain-containing protein 2">
    <location>
        <begin position="1"/>
        <end position="518"/>
    </location>
</feature>
<feature type="topological domain" description="Cytoplasmic" evidence="8">
    <location>
        <begin position="1"/>
        <end position="496"/>
    </location>
</feature>
<feature type="transmembrane region" description="Helical; Anchor for type IV membrane protein" evidence="1">
    <location>
        <begin position="497"/>
        <end position="518"/>
    </location>
</feature>
<feature type="domain" description="CRAL-TRIO" evidence="2">
    <location>
        <begin position="85"/>
        <end position="239"/>
    </location>
</feature>
<feature type="domain" description="MSP" evidence="3">
    <location>
        <begin position="327"/>
        <end position="445"/>
    </location>
</feature>
<feature type="region of interest" description="Disordered" evidence="4">
    <location>
        <begin position="252"/>
        <end position="312"/>
    </location>
</feature>
<feature type="region of interest" description="Required for FFAT motif binding and phosphorylated FFAT motif binding" evidence="1">
    <location>
        <begin position="365"/>
        <end position="366"/>
    </location>
</feature>
<feature type="compositionally biased region" description="Basic and acidic residues" evidence="4">
    <location>
        <begin position="265"/>
        <end position="279"/>
    </location>
</feature>
<feature type="compositionally biased region" description="Basic and acidic residues" evidence="4">
    <location>
        <begin position="300"/>
        <end position="312"/>
    </location>
</feature>
<feature type="site" description="Required for phosphorylated FFAT motif binding" evidence="1">
    <location>
        <position position="363"/>
    </location>
</feature>
<feature type="site" description="Required for FFAT motif binding" evidence="1">
    <location>
        <position position="374"/>
    </location>
</feature>
<feature type="splice variant" id="VSP_014047" description="In isoform 4." evidence="7">
    <original>DMDFV</original>
    <variation>VSILH</variation>
    <location>
        <begin position="160"/>
        <end position="164"/>
    </location>
</feature>
<feature type="splice variant" id="VSP_014048" description="In isoform 4." evidence="7">
    <location>
        <begin position="165"/>
        <end position="518"/>
    </location>
</feature>
<feature type="splice variant" id="VSP_014049" description="In isoform 3." evidence="6">
    <original>LNRLLESNRKLED</original>
    <variation>FATSRCETDCSPH</variation>
    <location>
        <begin position="474"/>
        <end position="486"/>
    </location>
</feature>
<feature type="splice variant" id="VSP_014050" description="In isoform 2." evidence="7">
    <original>LNRLLESN</original>
    <variation>EESPLPSK</variation>
    <location>
        <begin position="474"/>
        <end position="481"/>
    </location>
</feature>
<feature type="splice variant" id="VSP_014051" description="In isoform 2." evidence="7">
    <location>
        <begin position="482"/>
        <end position="518"/>
    </location>
</feature>
<feature type="splice variant" id="VSP_014052" description="In isoform 3." evidence="6">
    <location>
        <begin position="487"/>
        <end position="518"/>
    </location>
</feature>
<feature type="sequence variant" description="In strain: FVB/N." evidence="5">
    <original>P</original>
    <variation>S</variation>
    <location>
        <position position="288"/>
    </location>
</feature>
<feature type="sequence conflict" description="In Ref. 1; BAB26972." evidence="8" ref="1">
    <original>F</original>
    <variation>S</variation>
    <location>
        <position position="249"/>
    </location>
</feature>
<feature type="strand" evidence="10">
    <location>
        <begin position="326"/>
        <end position="328"/>
    </location>
</feature>
<feature type="strand" evidence="10">
    <location>
        <begin position="330"/>
        <end position="334"/>
    </location>
</feature>
<feature type="strand" evidence="10">
    <location>
        <begin position="341"/>
        <end position="344"/>
    </location>
</feature>
<feature type="strand" evidence="10">
    <location>
        <begin position="348"/>
        <end position="354"/>
    </location>
</feature>
<feature type="strand" evidence="10">
    <location>
        <begin position="356"/>
        <end position="358"/>
    </location>
</feature>
<feature type="strand" evidence="10">
    <location>
        <begin position="360"/>
        <end position="367"/>
    </location>
</feature>
<feature type="turn" evidence="10">
    <location>
        <begin position="369"/>
        <end position="371"/>
    </location>
</feature>
<feature type="strand" evidence="10">
    <location>
        <begin position="372"/>
        <end position="381"/>
    </location>
</feature>
<feature type="strand" evidence="10">
    <location>
        <begin position="386"/>
        <end position="393"/>
    </location>
</feature>
<feature type="strand" evidence="10">
    <location>
        <begin position="395"/>
        <end position="397"/>
    </location>
</feature>
<feature type="strand" evidence="10">
    <location>
        <begin position="405"/>
        <end position="411"/>
    </location>
</feature>
<feature type="helix" evidence="10">
    <location>
        <begin position="420"/>
        <end position="429"/>
    </location>
</feature>
<feature type="turn" evidence="10">
    <location>
        <begin position="432"/>
        <end position="434"/>
    </location>
</feature>
<feature type="strand" evidence="10">
    <location>
        <begin position="436"/>
        <end position="440"/>
    </location>
</feature>
<feature type="strand" evidence="10">
    <location>
        <begin position="449"/>
        <end position="453"/>
    </location>
</feature>
<protein>
    <recommendedName>
        <fullName evidence="8">Motile sperm domain-containing protein 2</fullName>
    </recommendedName>
</protein>
<keyword id="KW-0002">3D-structure</keyword>
<keyword id="KW-0025">Alternative splicing</keyword>
<keyword id="KW-0145">Chemotaxis</keyword>
<keyword id="KW-0256">Endoplasmic reticulum</keyword>
<keyword id="KW-0472">Membrane</keyword>
<keyword id="KW-1185">Reference proteome</keyword>
<keyword id="KW-0812">Transmembrane</keyword>
<keyword id="KW-1133">Transmembrane helix</keyword>
<reference key="1">
    <citation type="journal article" date="2005" name="Science">
        <title>The transcriptional landscape of the mammalian genome.</title>
        <authorList>
            <person name="Carninci P."/>
            <person name="Kasukawa T."/>
            <person name="Katayama S."/>
            <person name="Gough J."/>
            <person name="Frith M.C."/>
            <person name="Maeda N."/>
            <person name="Oyama R."/>
            <person name="Ravasi T."/>
            <person name="Lenhard B."/>
            <person name="Wells C."/>
            <person name="Kodzius R."/>
            <person name="Shimokawa K."/>
            <person name="Bajic V.B."/>
            <person name="Brenner S.E."/>
            <person name="Batalov S."/>
            <person name="Forrest A.R."/>
            <person name="Zavolan M."/>
            <person name="Davis M.J."/>
            <person name="Wilming L.G."/>
            <person name="Aidinis V."/>
            <person name="Allen J.E."/>
            <person name="Ambesi-Impiombato A."/>
            <person name="Apweiler R."/>
            <person name="Aturaliya R.N."/>
            <person name="Bailey T.L."/>
            <person name="Bansal M."/>
            <person name="Baxter L."/>
            <person name="Beisel K.W."/>
            <person name="Bersano T."/>
            <person name="Bono H."/>
            <person name="Chalk A.M."/>
            <person name="Chiu K.P."/>
            <person name="Choudhary V."/>
            <person name="Christoffels A."/>
            <person name="Clutterbuck D.R."/>
            <person name="Crowe M.L."/>
            <person name="Dalla E."/>
            <person name="Dalrymple B.P."/>
            <person name="de Bono B."/>
            <person name="Della Gatta G."/>
            <person name="di Bernardo D."/>
            <person name="Down T."/>
            <person name="Engstrom P."/>
            <person name="Fagiolini M."/>
            <person name="Faulkner G."/>
            <person name="Fletcher C.F."/>
            <person name="Fukushima T."/>
            <person name="Furuno M."/>
            <person name="Futaki S."/>
            <person name="Gariboldi M."/>
            <person name="Georgii-Hemming P."/>
            <person name="Gingeras T.R."/>
            <person name="Gojobori T."/>
            <person name="Green R.E."/>
            <person name="Gustincich S."/>
            <person name="Harbers M."/>
            <person name="Hayashi Y."/>
            <person name="Hensch T.K."/>
            <person name="Hirokawa N."/>
            <person name="Hill D."/>
            <person name="Huminiecki L."/>
            <person name="Iacono M."/>
            <person name="Ikeo K."/>
            <person name="Iwama A."/>
            <person name="Ishikawa T."/>
            <person name="Jakt M."/>
            <person name="Kanapin A."/>
            <person name="Katoh M."/>
            <person name="Kawasawa Y."/>
            <person name="Kelso J."/>
            <person name="Kitamura H."/>
            <person name="Kitano H."/>
            <person name="Kollias G."/>
            <person name="Krishnan S.P."/>
            <person name="Kruger A."/>
            <person name="Kummerfeld S.K."/>
            <person name="Kurochkin I.V."/>
            <person name="Lareau L.F."/>
            <person name="Lazarevic D."/>
            <person name="Lipovich L."/>
            <person name="Liu J."/>
            <person name="Liuni S."/>
            <person name="McWilliam S."/>
            <person name="Madan Babu M."/>
            <person name="Madera M."/>
            <person name="Marchionni L."/>
            <person name="Matsuda H."/>
            <person name="Matsuzawa S."/>
            <person name="Miki H."/>
            <person name="Mignone F."/>
            <person name="Miyake S."/>
            <person name="Morris K."/>
            <person name="Mottagui-Tabar S."/>
            <person name="Mulder N."/>
            <person name="Nakano N."/>
            <person name="Nakauchi H."/>
            <person name="Ng P."/>
            <person name="Nilsson R."/>
            <person name="Nishiguchi S."/>
            <person name="Nishikawa S."/>
            <person name="Nori F."/>
            <person name="Ohara O."/>
            <person name="Okazaki Y."/>
            <person name="Orlando V."/>
            <person name="Pang K.C."/>
            <person name="Pavan W.J."/>
            <person name="Pavesi G."/>
            <person name="Pesole G."/>
            <person name="Petrovsky N."/>
            <person name="Piazza S."/>
            <person name="Reed J."/>
            <person name="Reid J.F."/>
            <person name="Ring B.Z."/>
            <person name="Ringwald M."/>
            <person name="Rost B."/>
            <person name="Ruan Y."/>
            <person name="Salzberg S.L."/>
            <person name="Sandelin A."/>
            <person name="Schneider C."/>
            <person name="Schoenbach C."/>
            <person name="Sekiguchi K."/>
            <person name="Semple C.A."/>
            <person name="Seno S."/>
            <person name="Sessa L."/>
            <person name="Sheng Y."/>
            <person name="Shibata Y."/>
            <person name="Shimada H."/>
            <person name="Shimada K."/>
            <person name="Silva D."/>
            <person name="Sinclair B."/>
            <person name="Sperling S."/>
            <person name="Stupka E."/>
            <person name="Sugiura K."/>
            <person name="Sultana R."/>
            <person name="Takenaka Y."/>
            <person name="Taki K."/>
            <person name="Tammoja K."/>
            <person name="Tan S.L."/>
            <person name="Tang S."/>
            <person name="Taylor M.S."/>
            <person name="Tegner J."/>
            <person name="Teichmann S.A."/>
            <person name="Ueda H.R."/>
            <person name="van Nimwegen E."/>
            <person name="Verardo R."/>
            <person name="Wei C.L."/>
            <person name="Yagi K."/>
            <person name="Yamanishi H."/>
            <person name="Zabarovsky E."/>
            <person name="Zhu S."/>
            <person name="Zimmer A."/>
            <person name="Hide W."/>
            <person name="Bult C."/>
            <person name="Grimmond S.M."/>
            <person name="Teasdale R.D."/>
            <person name="Liu E.T."/>
            <person name="Brusic V."/>
            <person name="Quackenbush J."/>
            <person name="Wahlestedt C."/>
            <person name="Mattick J.S."/>
            <person name="Hume D.A."/>
            <person name="Kai C."/>
            <person name="Sasaki D."/>
            <person name="Tomaru Y."/>
            <person name="Fukuda S."/>
            <person name="Kanamori-Katayama M."/>
            <person name="Suzuki M."/>
            <person name="Aoki J."/>
            <person name="Arakawa T."/>
            <person name="Iida J."/>
            <person name="Imamura K."/>
            <person name="Itoh M."/>
            <person name="Kato T."/>
            <person name="Kawaji H."/>
            <person name="Kawagashira N."/>
            <person name="Kawashima T."/>
            <person name="Kojima M."/>
            <person name="Kondo S."/>
            <person name="Konno H."/>
            <person name="Nakano K."/>
            <person name="Ninomiya N."/>
            <person name="Nishio T."/>
            <person name="Okada M."/>
            <person name="Plessy C."/>
            <person name="Shibata K."/>
            <person name="Shiraki T."/>
            <person name="Suzuki S."/>
            <person name="Tagami M."/>
            <person name="Waki K."/>
            <person name="Watahiki A."/>
            <person name="Okamura-Oho Y."/>
            <person name="Suzuki H."/>
            <person name="Kawai J."/>
            <person name="Hayashizaki Y."/>
        </authorList>
    </citation>
    <scope>NUCLEOTIDE SEQUENCE [LARGE SCALE MRNA] (ISOFORMS 1; 2 AND 4)</scope>
    <source>
        <strain>C57BL/6J</strain>
        <tissue>Cerebellum</tissue>
        <tissue>Embryonic stem cell</tissue>
        <tissue>Fetal testis</tissue>
        <tissue>Thymus</tissue>
    </source>
</reference>
<reference key="2">
    <citation type="journal article" date="2004" name="Genome Res.">
        <title>The status, quality, and expansion of the NIH full-length cDNA project: the Mammalian Gene Collection (MGC).</title>
        <authorList>
            <consortium name="The MGC Project Team"/>
        </authorList>
    </citation>
    <scope>NUCLEOTIDE SEQUENCE [LARGE SCALE MRNA] (ISOFORM 3)</scope>
    <scope>VARIANT SER-288</scope>
    <source>
        <strain>FVB/N</strain>
        <tissue>Kidney</tissue>
    </source>
</reference>
<reference key="3">
    <citation type="journal article" date="2010" name="Cell">
        <title>A tissue-specific atlas of mouse protein phosphorylation and expression.</title>
        <authorList>
            <person name="Huttlin E.L."/>
            <person name="Jedrychowski M.P."/>
            <person name="Elias J.E."/>
            <person name="Goswami T."/>
            <person name="Rad R."/>
            <person name="Beausoleil S.A."/>
            <person name="Villen J."/>
            <person name="Haas W."/>
            <person name="Sowa M.E."/>
            <person name="Gygi S.P."/>
        </authorList>
    </citation>
    <scope>IDENTIFICATION BY MASS SPECTROMETRY [LARGE SCALE ANALYSIS]</scope>
    <source>
        <tissue>Kidney</tissue>
        <tissue>Liver</tissue>
        <tissue>Lung</tissue>
        <tissue>Testis</tissue>
    </source>
</reference>
<reference key="4">
    <citation type="submission" date="2004-11" db="PDB data bank">
        <title>Solution structure of the MSP domain of Riken cDNA 6030424E15.</title>
        <authorList>
            <consortium name="RIKEN structural genomics initiative (RSGI)"/>
        </authorList>
    </citation>
    <scope>STRUCTURE BY NMR OF 317-455</scope>
</reference>
<gene>
    <name evidence="9" type="primary">Mospd2</name>
</gene>
<evidence type="ECO:0000250" key="1">
    <source>
        <dbReference type="UniProtKB" id="Q8NHP6"/>
    </source>
</evidence>
<evidence type="ECO:0000255" key="2">
    <source>
        <dbReference type="PROSITE-ProRule" id="PRU00056"/>
    </source>
</evidence>
<evidence type="ECO:0000255" key="3">
    <source>
        <dbReference type="PROSITE-ProRule" id="PRU00132"/>
    </source>
</evidence>
<evidence type="ECO:0000256" key="4">
    <source>
        <dbReference type="SAM" id="MobiDB-lite"/>
    </source>
</evidence>
<evidence type="ECO:0000269" key="5">
    <source>
    </source>
</evidence>
<evidence type="ECO:0000303" key="6">
    <source>
    </source>
</evidence>
<evidence type="ECO:0000303" key="7">
    <source>
    </source>
</evidence>
<evidence type="ECO:0000305" key="8"/>
<evidence type="ECO:0000312" key="9">
    <source>
        <dbReference type="MGI" id="MGI:1924013"/>
    </source>
</evidence>
<evidence type="ECO:0007829" key="10">
    <source>
        <dbReference type="PDB" id="1WIC"/>
    </source>
</evidence>
<proteinExistence type="evidence at protein level"/>